<protein>
    <recommendedName>
        <fullName evidence="1">Large ribosomal subunit protein bL36c</fullName>
    </recommendedName>
    <alternativeName>
        <fullName>50S ribosomal protein L36, chloroplastic</fullName>
    </alternativeName>
</protein>
<accession>P28528</accession>
<accession>O46911</accession>
<sequence>MKVVSSIGSLKNRSKDCQIVKRRGRIYVICKTDPRLKVRQGGAKMKRK</sequence>
<evidence type="ECO:0000305" key="1"/>
<comment type="subcellular location">
    <subcellularLocation>
        <location>Plastid</location>
        <location>Chloroplast</location>
    </subcellularLocation>
</comment>
<comment type="similarity">
    <text evidence="1">Belongs to the bacterial ribosomal protein bL36 family.</text>
</comment>
<dbReference type="EMBL" id="AF041468">
    <property type="protein sequence ID" value="AAC35721.1"/>
    <property type="molecule type" value="Genomic_DNA"/>
</dbReference>
<dbReference type="PIR" id="S20578">
    <property type="entry name" value="S20578"/>
</dbReference>
<dbReference type="RefSeq" id="NP_050787.1">
    <property type="nucleotide sequence ID" value="NC_000926.1"/>
</dbReference>
<dbReference type="SMR" id="P28528"/>
<dbReference type="GeneID" id="857095"/>
<dbReference type="HOGENOM" id="CLU_135723_3_1_1"/>
<dbReference type="GO" id="GO:0009507">
    <property type="term" value="C:chloroplast"/>
    <property type="evidence" value="ECO:0007669"/>
    <property type="project" value="UniProtKB-SubCell"/>
</dbReference>
<dbReference type="GO" id="GO:1990904">
    <property type="term" value="C:ribonucleoprotein complex"/>
    <property type="evidence" value="ECO:0007669"/>
    <property type="project" value="UniProtKB-KW"/>
</dbReference>
<dbReference type="GO" id="GO:0005840">
    <property type="term" value="C:ribosome"/>
    <property type="evidence" value="ECO:0007669"/>
    <property type="project" value="UniProtKB-KW"/>
</dbReference>
<dbReference type="GO" id="GO:0003735">
    <property type="term" value="F:structural constituent of ribosome"/>
    <property type="evidence" value="ECO:0007669"/>
    <property type="project" value="InterPro"/>
</dbReference>
<dbReference type="GO" id="GO:0006412">
    <property type="term" value="P:translation"/>
    <property type="evidence" value="ECO:0007669"/>
    <property type="project" value="UniProtKB-UniRule"/>
</dbReference>
<dbReference type="HAMAP" id="MF_00251">
    <property type="entry name" value="Ribosomal_bL36"/>
    <property type="match status" value="1"/>
</dbReference>
<dbReference type="InterPro" id="IPR000473">
    <property type="entry name" value="Ribosomal_bL36"/>
</dbReference>
<dbReference type="InterPro" id="IPR035977">
    <property type="entry name" value="Ribosomal_bL36_sp"/>
</dbReference>
<dbReference type="InterPro" id="IPR047621">
    <property type="entry name" value="Ribosomal_L36_bact"/>
</dbReference>
<dbReference type="NCBIfam" id="NF002021">
    <property type="entry name" value="PRK00831.1"/>
    <property type="match status" value="1"/>
</dbReference>
<dbReference type="NCBIfam" id="TIGR01022">
    <property type="entry name" value="rpmJ_bact"/>
    <property type="match status" value="1"/>
</dbReference>
<dbReference type="PANTHER" id="PTHR47781">
    <property type="entry name" value="50S RIBOSOMAL PROTEIN L36 2"/>
    <property type="match status" value="1"/>
</dbReference>
<dbReference type="PANTHER" id="PTHR47781:SF1">
    <property type="entry name" value="LARGE RIBOSOMAL SUBUNIT PROTEIN BL36B"/>
    <property type="match status" value="1"/>
</dbReference>
<dbReference type="Pfam" id="PF00444">
    <property type="entry name" value="Ribosomal_L36"/>
    <property type="match status" value="1"/>
</dbReference>
<dbReference type="SUPFAM" id="SSF57840">
    <property type="entry name" value="Ribosomal protein L36"/>
    <property type="match status" value="1"/>
</dbReference>
<dbReference type="PROSITE" id="PS00828">
    <property type="entry name" value="RIBOSOMAL_L36"/>
    <property type="match status" value="1"/>
</dbReference>
<reference key="1">
    <citation type="journal article" date="1997" name="Biochem. Mol. Biol. Int.">
        <title>The large ribosomal protein gene cluster of a cryptomonad plastid: gene organization, sequence and evolutionary implications.</title>
        <authorList>
            <person name="Wang S.L."/>
            <person name="Liu X.-Q."/>
            <person name="Douglas S.E."/>
        </authorList>
    </citation>
    <scope>NUCLEOTIDE SEQUENCE [GENOMIC DNA]</scope>
</reference>
<reference key="2">
    <citation type="journal article" date="1992" name="FEBS Lett.">
        <title>A secY homologue is found in the plastid genome of Cryptomonas phi.</title>
        <authorList>
            <person name="Douglas S.E."/>
        </authorList>
    </citation>
    <scope>NUCLEOTIDE SEQUENCE [GENOMIC DNA] OF 1-13</scope>
    <source>
        <strain>SSP. F</strain>
    </source>
</reference>
<geneLocation type="chloroplast"/>
<proteinExistence type="inferred from homology"/>
<feature type="chain" id="PRO_0000126322" description="Large ribosomal subunit protein bL36c">
    <location>
        <begin position="1"/>
        <end position="48"/>
    </location>
</feature>
<organism>
    <name type="scientific">Guillardia theta</name>
    <name type="common">Cryptophyte</name>
    <name type="synonym">Cryptomonas phi</name>
    <dbReference type="NCBI Taxonomy" id="55529"/>
    <lineage>
        <taxon>Eukaryota</taxon>
        <taxon>Cryptophyceae</taxon>
        <taxon>Pyrenomonadales</taxon>
        <taxon>Geminigeraceae</taxon>
        <taxon>Guillardia</taxon>
    </lineage>
</organism>
<keyword id="KW-0150">Chloroplast</keyword>
<keyword id="KW-0934">Plastid</keyword>
<keyword id="KW-0687">Ribonucleoprotein</keyword>
<keyword id="KW-0689">Ribosomal protein</keyword>
<name>RK36_GUITH</name>
<gene>
    <name type="primary">rpl36</name>
</gene>